<reference key="1">
    <citation type="journal article" date="2003" name="Proc. Natl. Acad. Sci. U.S.A.">
        <title>Complete genome sequence of the marine planctomycete Pirellula sp. strain 1.</title>
        <authorList>
            <person name="Gloeckner F.O."/>
            <person name="Kube M."/>
            <person name="Bauer M."/>
            <person name="Teeling H."/>
            <person name="Lombardot T."/>
            <person name="Ludwig W."/>
            <person name="Gade D."/>
            <person name="Beck A."/>
            <person name="Borzym K."/>
            <person name="Heitmann K."/>
            <person name="Rabus R."/>
            <person name="Schlesner H."/>
            <person name="Amann R."/>
            <person name="Reinhardt R."/>
        </authorList>
    </citation>
    <scope>NUCLEOTIDE SEQUENCE [LARGE SCALE GENOMIC DNA]</scope>
    <source>
        <strain>DSM 10527 / NCIMB 13988 / SH1</strain>
    </source>
</reference>
<keyword id="KW-0963">Cytoplasm</keyword>
<keyword id="KW-0648">Protein biosynthesis</keyword>
<keyword id="KW-1185">Reference proteome</keyword>
<gene>
    <name evidence="1" type="primary">frr</name>
    <name type="ordered locus">RB3886</name>
</gene>
<feature type="chain" id="PRO_0000167525" description="Ribosome-recycling factor">
    <location>
        <begin position="1"/>
        <end position="186"/>
    </location>
</feature>
<feature type="region of interest" description="Disordered" evidence="2">
    <location>
        <begin position="134"/>
        <end position="186"/>
    </location>
</feature>
<feature type="compositionally biased region" description="Basic and acidic residues" evidence="2">
    <location>
        <begin position="134"/>
        <end position="169"/>
    </location>
</feature>
<feature type="compositionally biased region" description="Basic and acidic residues" evidence="2">
    <location>
        <begin position="176"/>
        <end position="186"/>
    </location>
</feature>
<comment type="function">
    <text evidence="1">Responsible for the release of ribosomes from messenger RNA at the termination of protein biosynthesis. May increase the efficiency of translation by recycling ribosomes from one round of translation to another.</text>
</comment>
<comment type="subcellular location">
    <subcellularLocation>
        <location evidence="1">Cytoplasm</location>
    </subcellularLocation>
</comment>
<comment type="similarity">
    <text evidence="1">Belongs to the RRF family.</text>
</comment>
<comment type="sequence caution" evidence="3">
    <conflict type="erroneous initiation">
        <sequence resource="EMBL-CDS" id="CAD73466"/>
    </conflict>
</comment>
<proteinExistence type="inferred from homology"/>
<protein>
    <recommendedName>
        <fullName evidence="1">Ribosome-recycling factor</fullName>
        <shortName evidence="1">RRF</shortName>
    </recommendedName>
    <alternativeName>
        <fullName evidence="1">Ribosome-releasing factor</fullName>
    </alternativeName>
</protein>
<dbReference type="EMBL" id="BX294139">
    <property type="protein sequence ID" value="CAD73466.1"/>
    <property type="status" value="ALT_INIT"/>
    <property type="molecule type" value="Genomic_DNA"/>
</dbReference>
<dbReference type="RefSeq" id="NP_865781.1">
    <property type="nucleotide sequence ID" value="NC_005027.1"/>
</dbReference>
<dbReference type="RefSeq" id="WP_007339966.1">
    <property type="nucleotide sequence ID" value="NC_005027.1"/>
</dbReference>
<dbReference type="SMR" id="Q7UTH0"/>
<dbReference type="FunCoup" id="Q7UTH0">
    <property type="interactions" value="533"/>
</dbReference>
<dbReference type="STRING" id="243090.RB3886"/>
<dbReference type="EnsemblBacteria" id="CAD73466">
    <property type="protein sequence ID" value="CAD73466"/>
    <property type="gene ID" value="RB3886"/>
</dbReference>
<dbReference type="GeneID" id="90609552"/>
<dbReference type="KEGG" id="rba:RB3886"/>
<dbReference type="PATRIC" id="fig|243090.15.peg.1810"/>
<dbReference type="eggNOG" id="COG0233">
    <property type="taxonomic scope" value="Bacteria"/>
</dbReference>
<dbReference type="HOGENOM" id="CLU_073981_2_0_0"/>
<dbReference type="InParanoid" id="Q7UTH0"/>
<dbReference type="OrthoDB" id="9804006at2"/>
<dbReference type="Proteomes" id="UP000001025">
    <property type="component" value="Chromosome"/>
</dbReference>
<dbReference type="GO" id="GO:0005737">
    <property type="term" value="C:cytoplasm"/>
    <property type="evidence" value="ECO:0007669"/>
    <property type="project" value="UniProtKB-SubCell"/>
</dbReference>
<dbReference type="GO" id="GO:0043023">
    <property type="term" value="F:ribosomal large subunit binding"/>
    <property type="evidence" value="ECO:0000318"/>
    <property type="project" value="GO_Central"/>
</dbReference>
<dbReference type="GO" id="GO:0006412">
    <property type="term" value="P:translation"/>
    <property type="evidence" value="ECO:0000318"/>
    <property type="project" value="GO_Central"/>
</dbReference>
<dbReference type="GO" id="GO:0006415">
    <property type="term" value="P:translational termination"/>
    <property type="evidence" value="ECO:0007669"/>
    <property type="project" value="UniProtKB-UniRule"/>
</dbReference>
<dbReference type="CDD" id="cd00520">
    <property type="entry name" value="RRF"/>
    <property type="match status" value="1"/>
</dbReference>
<dbReference type="FunFam" id="3.30.1360.40:FF:000001">
    <property type="entry name" value="Ribosome-recycling factor"/>
    <property type="match status" value="1"/>
</dbReference>
<dbReference type="Gene3D" id="3.30.1360.40">
    <property type="match status" value="1"/>
</dbReference>
<dbReference type="Gene3D" id="1.10.132.20">
    <property type="entry name" value="Ribosome-recycling factor"/>
    <property type="match status" value="1"/>
</dbReference>
<dbReference type="HAMAP" id="MF_00040">
    <property type="entry name" value="RRF"/>
    <property type="match status" value="1"/>
</dbReference>
<dbReference type="InterPro" id="IPR002661">
    <property type="entry name" value="Ribosome_recyc_fac"/>
</dbReference>
<dbReference type="InterPro" id="IPR023584">
    <property type="entry name" value="Ribosome_recyc_fac_dom"/>
</dbReference>
<dbReference type="InterPro" id="IPR036191">
    <property type="entry name" value="RRF_sf"/>
</dbReference>
<dbReference type="NCBIfam" id="TIGR00496">
    <property type="entry name" value="frr"/>
    <property type="match status" value="1"/>
</dbReference>
<dbReference type="PANTHER" id="PTHR20982:SF3">
    <property type="entry name" value="MITOCHONDRIAL RIBOSOME RECYCLING FACTOR PSEUDO 1"/>
    <property type="match status" value="1"/>
</dbReference>
<dbReference type="PANTHER" id="PTHR20982">
    <property type="entry name" value="RIBOSOME RECYCLING FACTOR"/>
    <property type="match status" value="1"/>
</dbReference>
<dbReference type="Pfam" id="PF01765">
    <property type="entry name" value="RRF"/>
    <property type="match status" value="1"/>
</dbReference>
<dbReference type="SUPFAM" id="SSF55194">
    <property type="entry name" value="Ribosome recycling factor, RRF"/>
    <property type="match status" value="1"/>
</dbReference>
<name>RRF_RHOBA</name>
<sequence length="186" mass="20612">MTSDEILMDAEERMDKAVSVLQNNLSGIRTGRANPGLVDSIKVEVYGSLTPLKQLASIGTPEPQQILIRPYDATTIKDIEKAIVAGDLGLNPQNDGRVIRLNVPPLSGEVRKKMVSRIKELAEEAKVSIRNIRRDANKAAETAEKDKEMTEDDRDKTKDQVQELTKKAETNVNESAKAREAEVMED</sequence>
<organism>
    <name type="scientific">Rhodopirellula baltica (strain DSM 10527 / NCIMB 13988 / SH1)</name>
    <dbReference type="NCBI Taxonomy" id="243090"/>
    <lineage>
        <taxon>Bacteria</taxon>
        <taxon>Pseudomonadati</taxon>
        <taxon>Planctomycetota</taxon>
        <taxon>Planctomycetia</taxon>
        <taxon>Pirellulales</taxon>
        <taxon>Pirellulaceae</taxon>
        <taxon>Rhodopirellula</taxon>
    </lineage>
</organism>
<evidence type="ECO:0000255" key="1">
    <source>
        <dbReference type="HAMAP-Rule" id="MF_00040"/>
    </source>
</evidence>
<evidence type="ECO:0000256" key="2">
    <source>
        <dbReference type="SAM" id="MobiDB-lite"/>
    </source>
</evidence>
<evidence type="ECO:0000305" key="3"/>
<accession>Q7UTH0</accession>